<accession>P48032</accession>
<name>TIMP3_RAT</name>
<reference key="1">
    <citation type="journal article" date="1996" name="Gene">
        <title>Cloning and expression of the cDNA encoding rat tissue inhibitor of metalloproteinase 3 (TIMP-3).</title>
        <authorList>
            <person name="Wu I."/>
            <person name="Moses M.A."/>
        </authorList>
    </citation>
    <scope>NUCLEOTIDE SEQUENCE [MRNA]</scope>
</reference>
<proteinExistence type="evidence at transcript level"/>
<feature type="signal peptide" evidence="5">
    <location>
        <begin position="1"/>
        <end position="23"/>
    </location>
</feature>
<feature type="chain" id="PRO_0000034345" description="Metalloproteinase inhibitor 3">
    <location>
        <begin position="24"/>
        <end position="211"/>
    </location>
</feature>
<feature type="domain" description="NTR" evidence="6">
    <location>
        <begin position="24"/>
        <end position="143"/>
    </location>
</feature>
<feature type="region of interest" description="Involved in metalloproteinase-binding" evidence="2">
    <location>
        <begin position="24"/>
        <end position="27"/>
    </location>
</feature>
<feature type="region of interest" description="Involved in metalloproteinase-binding" evidence="2">
    <location>
        <begin position="88"/>
        <end position="89"/>
    </location>
</feature>
<feature type="region of interest" description="Mediates interaction with EFEMP1" evidence="1">
    <location>
        <begin position="105"/>
        <end position="188"/>
    </location>
</feature>
<feature type="binding site" evidence="2">
    <location>
        <position position="24"/>
    </location>
    <ligand>
        <name>Zn(2+)</name>
        <dbReference type="ChEBI" id="CHEBI:29105"/>
        <note>ligand shared with metalloproteinase partner</note>
    </ligand>
</feature>
<feature type="site" description="Involved in metalloproteinase-binding" evidence="2">
    <location>
        <position position="37"/>
    </location>
</feature>
<feature type="disulfide bond" evidence="6">
    <location>
        <begin position="24"/>
        <end position="91"/>
    </location>
</feature>
<feature type="disulfide bond" evidence="6">
    <location>
        <begin position="26"/>
        <end position="118"/>
    </location>
</feature>
<feature type="disulfide bond" evidence="6">
    <location>
        <begin position="36"/>
        <end position="143"/>
    </location>
</feature>
<feature type="disulfide bond" evidence="6">
    <location>
        <begin position="145"/>
        <end position="192"/>
    </location>
</feature>
<feature type="disulfide bond" evidence="6">
    <location>
        <begin position="150"/>
        <end position="155"/>
    </location>
</feature>
<feature type="disulfide bond" evidence="6">
    <location>
        <begin position="163"/>
        <end position="184"/>
    </location>
</feature>
<evidence type="ECO:0000250" key="1"/>
<evidence type="ECO:0000250" key="2">
    <source>
        <dbReference type="UniProtKB" id="P16035"/>
    </source>
</evidence>
<evidence type="ECO:0000250" key="3">
    <source>
        <dbReference type="UniProtKB" id="P35625"/>
    </source>
</evidence>
<evidence type="ECO:0000250" key="4">
    <source>
        <dbReference type="UniProtKB" id="P39876"/>
    </source>
</evidence>
<evidence type="ECO:0000255" key="5"/>
<evidence type="ECO:0000255" key="6">
    <source>
        <dbReference type="PROSITE-ProRule" id="PRU00295"/>
    </source>
</evidence>
<evidence type="ECO:0000305" key="7"/>
<keyword id="KW-1015">Disulfide bond</keyword>
<keyword id="KW-0272">Extracellular matrix</keyword>
<keyword id="KW-0479">Metal-binding</keyword>
<keyword id="KW-0481">Metalloenzyme inhibitor</keyword>
<keyword id="KW-0483">Metalloprotease inhibitor</keyword>
<keyword id="KW-0646">Protease inhibitor</keyword>
<keyword id="KW-1185">Reference proteome</keyword>
<keyword id="KW-0964">Secreted</keyword>
<keyword id="KW-0732">Signal</keyword>
<keyword id="KW-0862">Zinc</keyword>
<dbReference type="EMBL" id="U27201">
    <property type="protein sequence ID" value="AAA75002.1"/>
    <property type="molecule type" value="mRNA"/>
</dbReference>
<dbReference type="PIR" id="JC4630">
    <property type="entry name" value="JC4630"/>
</dbReference>
<dbReference type="SMR" id="P48032"/>
<dbReference type="FunCoup" id="P48032">
    <property type="interactions" value="572"/>
</dbReference>
<dbReference type="STRING" id="10116.ENSRNOP00000005746"/>
<dbReference type="BindingDB" id="P48032"/>
<dbReference type="ChEMBL" id="CHEMBL3881"/>
<dbReference type="MEROPS" id="I35.003"/>
<dbReference type="PhosphoSitePlus" id="P48032"/>
<dbReference type="PaxDb" id="10116-ENSRNOP00000005746"/>
<dbReference type="UCSC" id="RGD:3865">
    <property type="organism name" value="rat"/>
</dbReference>
<dbReference type="AGR" id="RGD:3865"/>
<dbReference type="RGD" id="3865">
    <property type="gene designation" value="Timp3"/>
</dbReference>
<dbReference type="eggNOG" id="KOG4745">
    <property type="taxonomic scope" value="Eukaryota"/>
</dbReference>
<dbReference type="InParanoid" id="P48032"/>
<dbReference type="PhylomeDB" id="P48032"/>
<dbReference type="Reactome" id="R-RNO-114608">
    <property type="pathway name" value="Platelet degranulation"/>
</dbReference>
<dbReference type="PRO" id="PR:P48032"/>
<dbReference type="Proteomes" id="UP000002494">
    <property type="component" value="Unplaced"/>
</dbReference>
<dbReference type="GO" id="GO:0005604">
    <property type="term" value="C:basement membrane"/>
    <property type="evidence" value="ECO:0000266"/>
    <property type="project" value="RGD"/>
</dbReference>
<dbReference type="GO" id="GO:0031012">
    <property type="term" value="C:extracellular matrix"/>
    <property type="evidence" value="ECO:0000318"/>
    <property type="project" value="GO_Central"/>
</dbReference>
<dbReference type="GO" id="GO:0005615">
    <property type="term" value="C:extracellular space"/>
    <property type="evidence" value="ECO:0000318"/>
    <property type="project" value="GO_Central"/>
</dbReference>
<dbReference type="GO" id="GO:0008191">
    <property type="term" value="F:metalloendopeptidase inhibitor activity"/>
    <property type="evidence" value="ECO:0000318"/>
    <property type="project" value="GO_Central"/>
</dbReference>
<dbReference type="GO" id="GO:0008270">
    <property type="term" value="F:zinc ion binding"/>
    <property type="evidence" value="ECO:0000250"/>
    <property type="project" value="UniProtKB"/>
</dbReference>
<dbReference type="GO" id="GO:0071456">
    <property type="term" value="P:cellular response to hypoxia"/>
    <property type="evidence" value="ECO:0000270"/>
    <property type="project" value="RGD"/>
</dbReference>
<dbReference type="GO" id="GO:0071354">
    <property type="term" value="P:cellular response to interleukin-6"/>
    <property type="evidence" value="ECO:0000270"/>
    <property type="project" value="RGD"/>
</dbReference>
<dbReference type="GO" id="GO:1901653">
    <property type="term" value="P:cellular response to peptide"/>
    <property type="evidence" value="ECO:0000270"/>
    <property type="project" value="RGD"/>
</dbReference>
<dbReference type="GO" id="GO:1901706">
    <property type="term" value="P:mesenchymal cell differentiation involved in bone development"/>
    <property type="evidence" value="ECO:0000315"/>
    <property type="project" value="RGD"/>
</dbReference>
<dbReference type="GO" id="GO:0051045">
    <property type="term" value="P:negative regulation of membrane protein ectodomain proteolysis"/>
    <property type="evidence" value="ECO:0000266"/>
    <property type="project" value="RGD"/>
</dbReference>
<dbReference type="GO" id="GO:0045861">
    <property type="term" value="P:negative regulation of proteolysis"/>
    <property type="evidence" value="ECO:0000315"/>
    <property type="project" value="RGD"/>
</dbReference>
<dbReference type="GO" id="GO:1904706">
    <property type="term" value="P:negative regulation of vascular associated smooth muscle cell proliferation"/>
    <property type="evidence" value="ECO:0000315"/>
    <property type="project" value="RGD"/>
</dbReference>
<dbReference type="GO" id="GO:0043200">
    <property type="term" value="P:response to amino acid"/>
    <property type="evidence" value="ECO:0000270"/>
    <property type="project" value="RGD"/>
</dbReference>
<dbReference type="GO" id="GO:0034097">
    <property type="term" value="P:response to cytokine"/>
    <property type="evidence" value="ECO:0000318"/>
    <property type="project" value="GO_Central"/>
</dbReference>
<dbReference type="GO" id="GO:0051593">
    <property type="term" value="P:response to folic acid"/>
    <property type="evidence" value="ECO:0000270"/>
    <property type="project" value="RGD"/>
</dbReference>
<dbReference type="GO" id="GO:0009725">
    <property type="term" value="P:response to hormone"/>
    <property type="evidence" value="ECO:0000270"/>
    <property type="project" value="RGD"/>
</dbReference>
<dbReference type="GO" id="GO:0009612">
    <property type="term" value="P:response to mechanical stimulus"/>
    <property type="evidence" value="ECO:0000270"/>
    <property type="project" value="RGD"/>
</dbReference>
<dbReference type="GO" id="GO:0014850">
    <property type="term" value="P:response to muscle activity"/>
    <property type="evidence" value="ECO:0000270"/>
    <property type="project" value="RGD"/>
</dbReference>
<dbReference type="GO" id="GO:0031667">
    <property type="term" value="P:response to nutrient levels"/>
    <property type="evidence" value="ECO:0000270"/>
    <property type="project" value="RGD"/>
</dbReference>
<dbReference type="GO" id="GO:0042246">
    <property type="term" value="P:tissue regeneration"/>
    <property type="evidence" value="ECO:0000270"/>
    <property type="project" value="RGD"/>
</dbReference>
<dbReference type="CDD" id="cd03585">
    <property type="entry name" value="NTR_TIMP"/>
    <property type="match status" value="1"/>
</dbReference>
<dbReference type="FunFam" id="3.90.370.10:FF:000001">
    <property type="entry name" value="Metalloproteinase inhibitor 3"/>
    <property type="match status" value="1"/>
</dbReference>
<dbReference type="FunFam" id="2.40.50.120:FF:000005">
    <property type="entry name" value="Metalloproteinase inhibitor 3 precursor"/>
    <property type="match status" value="1"/>
</dbReference>
<dbReference type="Gene3D" id="2.40.50.120">
    <property type="match status" value="1"/>
</dbReference>
<dbReference type="Gene3D" id="3.90.370.10">
    <property type="entry name" value="Tissue inhibitor of metalloproteinase-1. Chain B, domain 1"/>
    <property type="match status" value="1"/>
</dbReference>
<dbReference type="InterPro" id="IPR001134">
    <property type="entry name" value="Netrin_domain"/>
</dbReference>
<dbReference type="InterPro" id="IPR001820">
    <property type="entry name" value="TIMP"/>
</dbReference>
<dbReference type="InterPro" id="IPR008993">
    <property type="entry name" value="TIMP-like_OB-fold"/>
</dbReference>
<dbReference type="InterPro" id="IPR027465">
    <property type="entry name" value="TIMP_C"/>
</dbReference>
<dbReference type="InterPro" id="IPR030490">
    <property type="entry name" value="TIMP_CS"/>
</dbReference>
<dbReference type="PANTHER" id="PTHR11844">
    <property type="entry name" value="METALLOPROTEASE INHIBITOR"/>
    <property type="match status" value="1"/>
</dbReference>
<dbReference type="PANTHER" id="PTHR11844:SF22">
    <property type="entry name" value="METALLOPROTEINASE INHIBITOR 3"/>
    <property type="match status" value="1"/>
</dbReference>
<dbReference type="Pfam" id="PF00965">
    <property type="entry name" value="TIMP"/>
    <property type="match status" value="1"/>
</dbReference>
<dbReference type="SMART" id="SM00206">
    <property type="entry name" value="NTR"/>
    <property type="match status" value="1"/>
</dbReference>
<dbReference type="SUPFAM" id="SSF50242">
    <property type="entry name" value="TIMP-like"/>
    <property type="match status" value="1"/>
</dbReference>
<dbReference type="PROSITE" id="PS50189">
    <property type="entry name" value="NTR"/>
    <property type="match status" value="1"/>
</dbReference>
<dbReference type="PROSITE" id="PS00288">
    <property type="entry name" value="TIMP"/>
    <property type="match status" value="1"/>
</dbReference>
<protein>
    <recommendedName>
        <fullName>Metalloproteinase inhibitor 3</fullName>
    </recommendedName>
    <alternativeName>
        <fullName>Tissue inhibitor of metalloproteinases 3</fullName>
        <shortName>TIMP-3</shortName>
    </alternativeName>
</protein>
<comment type="function">
    <text evidence="3 4">Mediates a variety of processes including matrix regulation and turnover, inflammation, and angiogenesis, through reversible inhibition of zinc protease superfamily enzymes, primarily matrix metalloproteinases (MMPs). Regulates extracellular matrix (ECM) remodeling through inhibition of matrix metalloproteinases (MMP) including MMP-1, MMP-2, MMP-3, MMP-7, MMP-9, MMP-13, MMP-14 and MMP-15. Additionally, modulates the processing of amyloid precursor protein (APP) and apolipoprotein E receptor ApoER2 by inhibiting two alpha-secretases ADAM10 and ADAM17. Functions as a tumor suppressor and a potent inhibitor of angiogenesis. Exerts its anti-angiogenic effect by directly interacting with vascular endothelial growth factor (VEGF) receptor-2/KDR, preventing its binding to the VEGFA ligand. Selectively induces apoptosis in angiogenic endothelial cells through a caspase-independent cell death pathway. Mechanistically, inhibits matrix-induced focal adhesion kinase PTK2 tyrosine phosphorylation and association with paxillin/PXN and disrupts the incorporation of ITGB3, PTK2 and PXN into focal adhesion contacts on the matrix.</text>
</comment>
<comment type="subunit">
    <text evidence="3">Interacts with EFEMP1. Interacts with KDR.</text>
</comment>
<comment type="subcellular location">
    <subcellularLocation>
        <location evidence="3">Secreted</location>
        <location evidence="3">Extracellular space</location>
        <location evidence="3">Extracellular matrix</location>
    </subcellularLocation>
</comment>
<comment type="similarity">
    <text evidence="7">Belongs to the protease inhibitor I35 (TIMP) family.</text>
</comment>
<gene>
    <name type="primary">Timp3</name>
    <name type="synonym">Timp-3</name>
</gene>
<organism>
    <name type="scientific">Rattus norvegicus</name>
    <name type="common">Rat</name>
    <dbReference type="NCBI Taxonomy" id="10116"/>
    <lineage>
        <taxon>Eukaryota</taxon>
        <taxon>Metazoa</taxon>
        <taxon>Chordata</taxon>
        <taxon>Craniata</taxon>
        <taxon>Vertebrata</taxon>
        <taxon>Euteleostomi</taxon>
        <taxon>Mammalia</taxon>
        <taxon>Eutheria</taxon>
        <taxon>Euarchontoglires</taxon>
        <taxon>Glires</taxon>
        <taxon>Rodentia</taxon>
        <taxon>Myomorpha</taxon>
        <taxon>Muroidea</taxon>
        <taxon>Muridae</taxon>
        <taxon>Murinae</taxon>
        <taxon>Rattus</taxon>
    </lineage>
</organism>
<sequence length="211" mass="24226">MTPWLGLVVLLSCWSLGHWGTEACTCSPSHPQDAFCNSDIVIRAKVVGKKLVKEGPFGTLVYTIKQMKMYRGFSKMPHVQYIHTEASESLCGLKLEVNKYQYLLTGRVYEGKMYTGLCNFVERWDHLTLSQRKGLNYRYHLGCNCKIKSCYYLPCFVTSKKECLWTDMLSNFGYPGYQSKHYACIRQKGGYCSWYRGWAPPDKSISNATDP</sequence>